<dbReference type="EMBL" id="CP001144">
    <property type="protein sequence ID" value="ACH75022.1"/>
    <property type="molecule type" value="Genomic_DNA"/>
</dbReference>
<dbReference type="RefSeq" id="WP_001519746.1">
    <property type="nucleotide sequence ID" value="NC_011205.1"/>
</dbReference>
<dbReference type="SMR" id="B5FQ34"/>
<dbReference type="KEGG" id="sed:SeD_A1026"/>
<dbReference type="HOGENOM" id="CLU_087560_1_1_6"/>
<dbReference type="Proteomes" id="UP000008322">
    <property type="component" value="Chromosome"/>
</dbReference>
<dbReference type="GO" id="GO:0030288">
    <property type="term" value="C:outer membrane-bounded periplasmic space"/>
    <property type="evidence" value="ECO:0007669"/>
    <property type="project" value="TreeGrafter"/>
</dbReference>
<dbReference type="GO" id="GO:0044874">
    <property type="term" value="P:lipoprotein localization to outer membrane"/>
    <property type="evidence" value="ECO:0007669"/>
    <property type="project" value="UniProtKB-UniRule"/>
</dbReference>
<dbReference type="GO" id="GO:0042953">
    <property type="term" value="P:lipoprotein transport"/>
    <property type="evidence" value="ECO:0007669"/>
    <property type="project" value="InterPro"/>
</dbReference>
<dbReference type="CDD" id="cd16325">
    <property type="entry name" value="LolA"/>
    <property type="match status" value="1"/>
</dbReference>
<dbReference type="FunFam" id="2.50.20.10:FF:000001">
    <property type="entry name" value="Outer-membrane lipoprotein carrier protein"/>
    <property type="match status" value="1"/>
</dbReference>
<dbReference type="Gene3D" id="2.50.20.10">
    <property type="entry name" value="Lipoprotein localisation LolA/LolB/LppX"/>
    <property type="match status" value="1"/>
</dbReference>
<dbReference type="HAMAP" id="MF_00240">
    <property type="entry name" value="LolA"/>
    <property type="match status" value="1"/>
</dbReference>
<dbReference type="InterPro" id="IPR029046">
    <property type="entry name" value="LolA/LolB/LppX"/>
</dbReference>
<dbReference type="InterPro" id="IPR004564">
    <property type="entry name" value="OM_lipoprot_carrier_LolA-like"/>
</dbReference>
<dbReference type="InterPro" id="IPR018323">
    <property type="entry name" value="OM_lipoprot_carrier_LolA_Pbac"/>
</dbReference>
<dbReference type="NCBIfam" id="TIGR00547">
    <property type="entry name" value="lolA"/>
    <property type="match status" value="1"/>
</dbReference>
<dbReference type="PANTHER" id="PTHR35869">
    <property type="entry name" value="OUTER-MEMBRANE LIPOPROTEIN CARRIER PROTEIN"/>
    <property type="match status" value="1"/>
</dbReference>
<dbReference type="PANTHER" id="PTHR35869:SF1">
    <property type="entry name" value="OUTER-MEMBRANE LIPOPROTEIN CARRIER PROTEIN"/>
    <property type="match status" value="1"/>
</dbReference>
<dbReference type="Pfam" id="PF03548">
    <property type="entry name" value="LolA"/>
    <property type="match status" value="1"/>
</dbReference>
<dbReference type="SUPFAM" id="SSF89392">
    <property type="entry name" value="Prokaryotic lipoproteins and lipoprotein localization factors"/>
    <property type="match status" value="1"/>
</dbReference>
<organism>
    <name type="scientific">Salmonella dublin (strain CT_02021853)</name>
    <dbReference type="NCBI Taxonomy" id="439851"/>
    <lineage>
        <taxon>Bacteria</taxon>
        <taxon>Pseudomonadati</taxon>
        <taxon>Pseudomonadota</taxon>
        <taxon>Gammaproteobacteria</taxon>
        <taxon>Enterobacterales</taxon>
        <taxon>Enterobacteriaceae</taxon>
        <taxon>Salmonella</taxon>
    </lineage>
</organism>
<protein>
    <recommendedName>
        <fullName evidence="1">Outer-membrane lipoprotein carrier protein</fullName>
    </recommendedName>
</protein>
<sequence>MKKMAIACALLSSVVASSVWADAASSLKSRLDKVSSFHATFTQKVTDGSGAAVQEGQGDLWVKRPNLFNWHMTQPDESILVSDGKTLWFYNPFVEQATATWLKDATGNTPFMLIARNQASDWQQYNIKQDGDNFVLTPKASNGNLKQFTINVGRDGTIHQFSAVEQDDQRSAYQLKSQQNGAVDPSKFTFTPPQGVTIDDQRK</sequence>
<proteinExistence type="inferred from homology"/>
<keyword id="KW-0143">Chaperone</keyword>
<keyword id="KW-0574">Periplasm</keyword>
<keyword id="KW-0653">Protein transport</keyword>
<keyword id="KW-0732">Signal</keyword>
<keyword id="KW-0813">Transport</keyword>
<evidence type="ECO:0000255" key="1">
    <source>
        <dbReference type="HAMAP-Rule" id="MF_00240"/>
    </source>
</evidence>
<evidence type="ECO:0000256" key="2">
    <source>
        <dbReference type="SAM" id="MobiDB-lite"/>
    </source>
</evidence>
<name>LOLA_SALDC</name>
<accession>B5FQ34</accession>
<comment type="function">
    <text evidence="1">Participates in the translocation of lipoproteins from the inner membrane to the outer membrane. Only forms a complex with a lipoprotein if the residue after the N-terminal Cys is not an aspartate (The Asp acts as a targeting signal to indicate that the lipoprotein should stay in the inner membrane).</text>
</comment>
<comment type="subunit">
    <text evidence="1">Monomer.</text>
</comment>
<comment type="subcellular location">
    <subcellularLocation>
        <location evidence="1">Periplasm</location>
    </subcellularLocation>
</comment>
<comment type="similarity">
    <text evidence="1">Belongs to the LolA family.</text>
</comment>
<gene>
    <name evidence="1" type="primary">lolA</name>
    <name type="ordered locus">SeD_A1026</name>
</gene>
<feature type="signal peptide" evidence="1">
    <location>
        <begin position="1"/>
        <end position="21"/>
    </location>
</feature>
<feature type="chain" id="PRO_1000100724" description="Outer-membrane lipoprotein carrier protein">
    <location>
        <begin position="22"/>
        <end position="203"/>
    </location>
</feature>
<feature type="region of interest" description="Disordered" evidence="2">
    <location>
        <begin position="178"/>
        <end position="203"/>
    </location>
</feature>
<reference key="1">
    <citation type="journal article" date="2011" name="J. Bacteriol.">
        <title>Comparative genomics of 28 Salmonella enterica isolates: evidence for CRISPR-mediated adaptive sublineage evolution.</title>
        <authorList>
            <person name="Fricke W.F."/>
            <person name="Mammel M.K."/>
            <person name="McDermott P.F."/>
            <person name="Tartera C."/>
            <person name="White D.G."/>
            <person name="Leclerc J.E."/>
            <person name="Ravel J."/>
            <person name="Cebula T.A."/>
        </authorList>
    </citation>
    <scope>NUCLEOTIDE SEQUENCE [LARGE SCALE GENOMIC DNA]</scope>
    <source>
        <strain>CT_02021853</strain>
    </source>
</reference>